<evidence type="ECO:0000250" key="1"/>
<evidence type="ECO:0000269" key="2">
    <source>
    </source>
</evidence>
<evidence type="ECO:0000269" key="3">
    <source>
    </source>
</evidence>
<evidence type="ECO:0000269" key="4">
    <source>
    </source>
</evidence>
<evidence type="ECO:0000305" key="5"/>
<evidence type="ECO:0000305" key="6">
    <source>
    </source>
</evidence>
<evidence type="ECO:0000305" key="7">
    <source>
    </source>
</evidence>
<evidence type="ECO:0007744" key="8">
    <source>
        <dbReference type="PDB" id="1ILE"/>
    </source>
</evidence>
<evidence type="ECO:0007744" key="9">
    <source>
        <dbReference type="PDB" id="1JZQ"/>
    </source>
</evidence>
<evidence type="ECO:0007744" key="10">
    <source>
        <dbReference type="PDB" id="1JZS"/>
    </source>
</evidence>
<evidence type="ECO:0007744" key="11">
    <source>
        <dbReference type="PDB" id="1UDZ"/>
    </source>
</evidence>
<evidence type="ECO:0007744" key="12">
    <source>
        <dbReference type="PDB" id="1UE0"/>
    </source>
</evidence>
<evidence type="ECO:0007829" key="13">
    <source>
        <dbReference type="PDB" id="1ILE"/>
    </source>
</evidence>
<evidence type="ECO:0007829" key="14">
    <source>
        <dbReference type="PDB" id="1JZQ"/>
    </source>
</evidence>
<evidence type="ECO:0007829" key="15">
    <source>
        <dbReference type="PDB" id="1JZS"/>
    </source>
</evidence>
<evidence type="ECO:0007829" key="16">
    <source>
        <dbReference type="PDB" id="1WNY"/>
    </source>
</evidence>
<dbReference type="EC" id="6.1.1.5"/>
<dbReference type="EMBL" id="AP008226">
    <property type="protein sequence ID" value="BAD70890.1"/>
    <property type="molecule type" value="Genomic_DNA"/>
</dbReference>
<dbReference type="RefSeq" id="WP_011228416.1">
    <property type="nucleotide sequence ID" value="NC_006461.1"/>
</dbReference>
<dbReference type="RefSeq" id="YP_144333.1">
    <property type="nucleotide sequence ID" value="NC_006461.1"/>
</dbReference>
<dbReference type="PDB" id="1ILE">
    <property type="method" value="X-ray"/>
    <property type="resolution" value="2.50 A"/>
    <property type="chains" value="A=1-821"/>
</dbReference>
<dbReference type="PDB" id="1JZQ">
    <property type="method" value="X-ray"/>
    <property type="resolution" value="3.00 A"/>
    <property type="chains" value="A=1-821"/>
</dbReference>
<dbReference type="PDB" id="1JZS">
    <property type="method" value="X-ray"/>
    <property type="resolution" value="2.50 A"/>
    <property type="chains" value="A=1-821"/>
</dbReference>
<dbReference type="PDB" id="1UDZ">
    <property type="method" value="X-ray"/>
    <property type="resolution" value="1.80 A"/>
    <property type="chains" value="A/B=201-381"/>
</dbReference>
<dbReference type="PDB" id="1UE0">
    <property type="method" value="X-ray"/>
    <property type="resolution" value="2.00 A"/>
    <property type="chains" value="A/B=201-381"/>
</dbReference>
<dbReference type="PDB" id="1WK8">
    <property type="method" value="X-ray"/>
    <property type="resolution" value="1.70 A"/>
    <property type="chains" value="A/B=196-388"/>
</dbReference>
<dbReference type="PDB" id="1WNY">
    <property type="method" value="X-ray"/>
    <property type="resolution" value="1.60 A"/>
    <property type="chains" value="A/B=201-385"/>
</dbReference>
<dbReference type="PDB" id="1WNZ">
    <property type="method" value="X-ray"/>
    <property type="resolution" value="1.70 A"/>
    <property type="chains" value="A=201-385"/>
</dbReference>
<dbReference type="PDBsum" id="1ILE"/>
<dbReference type="PDBsum" id="1JZQ"/>
<dbReference type="PDBsum" id="1JZS"/>
<dbReference type="PDBsum" id="1UDZ"/>
<dbReference type="PDBsum" id="1UE0"/>
<dbReference type="PDBsum" id="1WK8"/>
<dbReference type="PDBsum" id="1WNY"/>
<dbReference type="PDBsum" id="1WNZ"/>
<dbReference type="SMR" id="P56690"/>
<dbReference type="ChEMBL" id="CHEMBL3879837"/>
<dbReference type="DrugBank" id="DB01755">
    <property type="generic name" value="N-[Isoleucinyl]-N'-[adenosyl]-diaminosufone"/>
</dbReference>
<dbReference type="DrugCentral" id="P56690"/>
<dbReference type="EnsemblBacteria" id="BAD70890">
    <property type="protein sequence ID" value="BAD70890"/>
    <property type="gene ID" value="BAD70890"/>
</dbReference>
<dbReference type="GeneID" id="3168241"/>
<dbReference type="KEGG" id="ttj:TTHA1067"/>
<dbReference type="PATRIC" id="fig|300852.9.peg.1047"/>
<dbReference type="eggNOG" id="COG0060">
    <property type="taxonomic scope" value="Bacteria"/>
</dbReference>
<dbReference type="HOGENOM" id="CLU_001493_1_1_0"/>
<dbReference type="PhylomeDB" id="P56690"/>
<dbReference type="BRENDA" id="6.1.1.5">
    <property type="organism ID" value="2305"/>
</dbReference>
<dbReference type="EvolutionaryTrace" id="P56690"/>
<dbReference type="Proteomes" id="UP000000532">
    <property type="component" value="Chromosome"/>
</dbReference>
<dbReference type="GO" id="GO:0005737">
    <property type="term" value="C:cytoplasm"/>
    <property type="evidence" value="ECO:0007669"/>
    <property type="project" value="UniProtKB-SubCell"/>
</dbReference>
<dbReference type="GO" id="GO:0002161">
    <property type="term" value="F:aminoacyl-tRNA deacylase activity"/>
    <property type="evidence" value="ECO:0007669"/>
    <property type="project" value="InterPro"/>
</dbReference>
<dbReference type="GO" id="GO:0005524">
    <property type="term" value="F:ATP binding"/>
    <property type="evidence" value="ECO:0007669"/>
    <property type="project" value="UniProtKB-UniRule"/>
</dbReference>
<dbReference type="GO" id="GO:0004822">
    <property type="term" value="F:isoleucine-tRNA ligase activity"/>
    <property type="evidence" value="ECO:0007669"/>
    <property type="project" value="UniProtKB-UniRule"/>
</dbReference>
<dbReference type="GO" id="GO:0000049">
    <property type="term" value="F:tRNA binding"/>
    <property type="evidence" value="ECO:0007669"/>
    <property type="project" value="InterPro"/>
</dbReference>
<dbReference type="GO" id="GO:0008270">
    <property type="term" value="F:zinc ion binding"/>
    <property type="evidence" value="ECO:0007669"/>
    <property type="project" value="UniProtKB-UniRule"/>
</dbReference>
<dbReference type="GO" id="GO:0006428">
    <property type="term" value="P:isoleucyl-tRNA aminoacylation"/>
    <property type="evidence" value="ECO:0007669"/>
    <property type="project" value="UniProtKB-UniRule"/>
</dbReference>
<dbReference type="CDD" id="cd07961">
    <property type="entry name" value="Anticodon_Ia_Ile_ABEc"/>
    <property type="match status" value="1"/>
</dbReference>
<dbReference type="CDD" id="cd00818">
    <property type="entry name" value="IleRS_core"/>
    <property type="match status" value="1"/>
</dbReference>
<dbReference type="FunFam" id="3.40.50.620:FF:000063">
    <property type="entry name" value="Isoleucine--tRNA ligase"/>
    <property type="match status" value="2"/>
</dbReference>
<dbReference type="Gene3D" id="3.40.50.620">
    <property type="entry name" value="HUPs"/>
    <property type="match status" value="2"/>
</dbReference>
<dbReference type="Gene3D" id="1.10.730.10">
    <property type="entry name" value="Isoleucyl-tRNA Synthetase, Domain 1"/>
    <property type="match status" value="1"/>
</dbReference>
<dbReference type="HAMAP" id="MF_02003">
    <property type="entry name" value="Ile_tRNA_synth_type2"/>
    <property type="match status" value="1"/>
</dbReference>
<dbReference type="InterPro" id="IPR001412">
    <property type="entry name" value="aa-tRNA-synth_I_CS"/>
</dbReference>
<dbReference type="InterPro" id="IPR002300">
    <property type="entry name" value="aa-tRNA-synth_Ia"/>
</dbReference>
<dbReference type="InterPro" id="IPR033709">
    <property type="entry name" value="Anticodon_Ile_ABEc"/>
</dbReference>
<dbReference type="InterPro" id="IPR002301">
    <property type="entry name" value="Ile-tRNA-ligase"/>
</dbReference>
<dbReference type="InterPro" id="IPR023586">
    <property type="entry name" value="Ile-tRNA-ligase_type2"/>
</dbReference>
<dbReference type="InterPro" id="IPR013155">
    <property type="entry name" value="M/V/L/I-tRNA-synth_anticd-bd"/>
</dbReference>
<dbReference type="InterPro" id="IPR014729">
    <property type="entry name" value="Rossmann-like_a/b/a_fold"/>
</dbReference>
<dbReference type="InterPro" id="IPR009080">
    <property type="entry name" value="tRNAsynth_Ia_anticodon-bd"/>
</dbReference>
<dbReference type="InterPro" id="IPR009008">
    <property type="entry name" value="Val/Leu/Ile-tRNA-synth_edit"/>
</dbReference>
<dbReference type="NCBIfam" id="TIGR00392">
    <property type="entry name" value="ileS"/>
    <property type="match status" value="1"/>
</dbReference>
<dbReference type="PANTHER" id="PTHR42780:SF1">
    <property type="entry name" value="ISOLEUCINE--TRNA LIGASE, CYTOPLASMIC"/>
    <property type="match status" value="1"/>
</dbReference>
<dbReference type="PANTHER" id="PTHR42780">
    <property type="entry name" value="SOLEUCYL-TRNA SYNTHETASE"/>
    <property type="match status" value="1"/>
</dbReference>
<dbReference type="Pfam" id="PF08264">
    <property type="entry name" value="Anticodon_1"/>
    <property type="match status" value="1"/>
</dbReference>
<dbReference type="Pfam" id="PF19302">
    <property type="entry name" value="DUF5915"/>
    <property type="match status" value="1"/>
</dbReference>
<dbReference type="Pfam" id="PF00133">
    <property type="entry name" value="tRNA-synt_1"/>
    <property type="match status" value="1"/>
</dbReference>
<dbReference type="PRINTS" id="PR00984">
    <property type="entry name" value="TRNASYNTHILE"/>
</dbReference>
<dbReference type="SUPFAM" id="SSF47323">
    <property type="entry name" value="Anticodon-binding domain of a subclass of class I aminoacyl-tRNA synthetases"/>
    <property type="match status" value="1"/>
</dbReference>
<dbReference type="SUPFAM" id="SSF52374">
    <property type="entry name" value="Nucleotidylyl transferase"/>
    <property type="match status" value="1"/>
</dbReference>
<dbReference type="SUPFAM" id="SSF50677">
    <property type="entry name" value="ValRS/IleRS/LeuRS editing domain"/>
    <property type="match status" value="1"/>
</dbReference>
<dbReference type="PROSITE" id="PS00178">
    <property type="entry name" value="AA_TRNA_LIGASE_I"/>
    <property type="match status" value="1"/>
</dbReference>
<gene>
    <name type="primary">ileS</name>
    <name type="ordered locus">TTHA1067</name>
</gene>
<keyword id="KW-0002">3D-structure</keyword>
<keyword id="KW-0030">Aminoacyl-tRNA synthetase</keyword>
<keyword id="KW-0067">ATP-binding</keyword>
<keyword id="KW-0963">Cytoplasm</keyword>
<keyword id="KW-0436">Ligase</keyword>
<keyword id="KW-0479">Metal-binding</keyword>
<keyword id="KW-0547">Nucleotide-binding</keyword>
<keyword id="KW-0648">Protein biosynthesis</keyword>
<keyword id="KW-1185">Reference proteome</keyword>
<keyword id="KW-0862">Zinc</keyword>
<protein>
    <recommendedName>
        <fullName>Isoleucine--tRNA ligase</fullName>
        <ecNumber>6.1.1.5</ecNumber>
    </recommendedName>
    <alternativeName>
        <fullName>Isoleucyl-tRNA synthetase</fullName>
        <shortName>IleRS</shortName>
    </alternativeName>
</protein>
<sequence length="1043" mass="119247">MFKEVGEPNFPKLEEEVLAFWKREKIFQKSVENRKGGPRYTVYEGPPTANGLPHVGHAQARSYKDLFPRYKTMRGYYAPRRAGWDTHGLPVELEVEKKLGLKSKREIEAYGIERFNQACRESVFTYEKEWEAFTERIAYWVDLENAYATLEPTYIESIWWSLKNLFDRGLLYRDHKVVPYCPRCGTPLSSHEVALGYKEIQDPSVYVRFPLKEPKKLGLEKASLLIWTTTPWTLPGNVAAAVHPEYTYAAFQVGDEALILEEGLGRKLLGEGTPVLKTFPGKALEGLPYTPPYPQALEKGYFVVLADYVSQEDGTGIVHQAPAFGAEDLETARVYGLPLLKTVDEEGKLLVEPFKGLYFREANRAILRDLRGRGLLFKEESYLHSYPHCWRCSTPLMYYATESWFIKNTLFKDELIRKNQEIHWVPPHIKEGRYGEWLKNLVDWALSRNRYWGTPLPIWVCQACGKEEAIGSFQELKARATKPLPEPFDPHRPYVDQVELACACGGTMRRVPYVIDVWYDSGAMPFASLHYPFEHEEVFRESFPADFIAEGIDQTRGWFNSLHQLGVMLFGSIAFKNVICHGLILDEKGQKMSKSKGNVVDPWDIIREFGADALRWYIYVSAPPEADRRFGPNLVRETVRDYFLTLWNVYSFFVTYANLDRPDLKNPPPPEKRPEMDRWLLARMQDLIQRVTEALEAYDPTTSARALRDFVVEDLSQWYVRRNRRRFWKNEDALDREAAYATLYEALVLVATLAAPFTPFLAEVLWQNLVRSVRPEAKESVHLADWPEADPALADEALVAQMRAVLKVVDLARAARAKSGVKTRTPLPLLLVTAPTALEREGLKRFAHEIAEELNVKEVRVLEPGEEILSYRVLPNLKLLGRKYGKLVPKIREALQRERERAAALALKGEAIPLEVEGEALTLLPEEVLLEAEAPKGYQALEKDGYVAALKVEVTEALRMEGLARDLIRLLQQARKDMGLKVSDRIRVGYEAEGPYLEALKRHGPWIAEEVLATAFGEGLFGGFEARVEDEEGKAVFHLARAE</sequence>
<comment type="function">
    <text evidence="1">Catalyzes the attachment of isoleucine to tRNA(Ile). As IleRS can inadvertently accommodate and process structurally similar amino acids such as valine, to avoid such errors it has two additional distinct tRNA(Ile)-dependent editing activities. One activity is designated as 'pretransfer' editing and involves the hydrolysis of activated Val-AMP. The other activity is designated 'posttransfer' editing and involves deacylation of mischarged Val-tRNA(Ile) (By similarity).</text>
</comment>
<comment type="catalytic activity">
    <reaction>
        <text>tRNA(Ile) + L-isoleucine + ATP = L-isoleucyl-tRNA(Ile) + AMP + diphosphate</text>
        <dbReference type="Rhea" id="RHEA:11060"/>
        <dbReference type="Rhea" id="RHEA-COMP:9666"/>
        <dbReference type="Rhea" id="RHEA-COMP:9695"/>
        <dbReference type="ChEBI" id="CHEBI:30616"/>
        <dbReference type="ChEBI" id="CHEBI:33019"/>
        <dbReference type="ChEBI" id="CHEBI:58045"/>
        <dbReference type="ChEBI" id="CHEBI:78442"/>
        <dbReference type="ChEBI" id="CHEBI:78528"/>
        <dbReference type="ChEBI" id="CHEBI:456215"/>
        <dbReference type="EC" id="6.1.1.5"/>
    </reaction>
</comment>
<comment type="cofactor">
    <cofactor evidence="6 7">
        <name>Zn(2+)</name>
        <dbReference type="ChEBI" id="CHEBI:29105"/>
    </cofactor>
    <text evidence="2 4">Binds 2 Zn(2+) ions per subunit.</text>
</comment>
<comment type="subunit">
    <text evidence="2 3 4">Monomer.</text>
</comment>
<comment type="subcellular location">
    <subcellularLocation>
        <location>Cytoplasm</location>
    </subcellularLocation>
</comment>
<comment type="domain">
    <text evidence="1">IleRS has two distinct active sites: one for aminoacylation and one for editing. The misactivated valine is translocated from the active site to the editing site, which sterically excludes the correctly activated isoleucine. The single editing site contains two valyl binding pockets, one specific for each substrate (Val-AMP or Val-tRNA(Ile)) (By similarity).</text>
</comment>
<comment type="miscellaneous">
    <text>The ATP consumption with regard to L-valine is nonproductive and is solely for substrate selection, which demonstrates the high cost of accuracy.</text>
</comment>
<comment type="similarity">
    <text evidence="5">Belongs to the class-I aminoacyl-tRNA synthetase family. IleS type 2 subfamily.</text>
</comment>
<name>SYI_THET8</name>
<reference key="1">
    <citation type="submission" date="2004-11" db="EMBL/GenBank/DDBJ databases">
        <title>Complete genome sequence of Thermus thermophilus HB8.</title>
        <authorList>
            <person name="Masui R."/>
            <person name="Kurokawa K."/>
            <person name="Nakagawa N."/>
            <person name="Tokunaga F."/>
            <person name="Koyama Y."/>
            <person name="Shibata T."/>
            <person name="Oshima T."/>
            <person name="Yokoyama S."/>
            <person name="Yasunaga T."/>
            <person name="Kuramitsu S."/>
        </authorList>
    </citation>
    <scope>NUCLEOTIDE SEQUENCE [LARGE SCALE GENOMIC DNA]</scope>
    <source>
        <strain>ATCC 27634 / DSM 579 / HB8</strain>
    </source>
</reference>
<reference evidence="8" key="2">
    <citation type="journal article" date="1998" name="Science">
        <title>Enzyme structure with two catalytic sites for double-sieve selection of substrate.</title>
        <authorList>
            <person name="Nureki O."/>
            <person name="Vassylyev D.G."/>
            <person name="Tateno M."/>
            <person name="Shimada A."/>
            <person name="Nakama T."/>
            <person name="Fukai S."/>
            <person name="Konno M."/>
            <person name="Hendrickson T.L."/>
            <person name="Schimmel P."/>
            <person name="Yokoyama S."/>
        </authorList>
    </citation>
    <scope>X-RAY CRYSTALLOGRAPHY (2.5 ANGSTROMS) OF 1-821 IN COMPLEX WITH ZINC IONS</scope>
    <scope>COFACTOR</scope>
</reference>
<reference evidence="9 10" key="3">
    <citation type="journal article" date="2001" name="J. Biol. Chem.">
        <title>Structural basis for the recognition of isoleucyl-adenylate and an antibiotic, mupirocin, by isoleucyl-tRNA synthetase.</title>
        <authorList>
            <person name="Nakama T."/>
            <person name="Nureki O."/>
            <person name="Yokoyama S."/>
        </authorList>
    </citation>
    <scope>X-RAY CRYSTALLOGRAPHY (2.5 ANGSTROMS) OF 1-821 IN COMPLEXES WITH ZINC IONS; ILE-ADENYLATE ANALOG AND MUPIROCIN</scope>
    <scope>COFACTOR</scope>
</reference>
<reference evidence="11 12" key="4">
    <citation type="journal article" date="2004" name="J. Biol. Chem.">
        <title>Crystal structures of the CP1 domain from Thermus thermophilus isoleucyl-tRNA synthetase and its complex with L-valine.</title>
        <authorList>
            <person name="Fukunaga R."/>
            <person name="Fukai S."/>
            <person name="Ishitani R."/>
            <person name="Nureki O."/>
            <person name="Yokoyama S."/>
        </authorList>
    </citation>
    <scope>X-RAY CRYSTALLOGRAPHY (1.8 ANGSTROMS) OF APOENZYME AND IN COMPLEX WITH VAL</scope>
    <scope>MUTAGENESIS OF THR-228; THR-229; THR-230; THR-233 AND ASP-328</scope>
</reference>
<organism>
    <name type="scientific">Thermus thermophilus (strain ATCC 27634 / DSM 579 / HB8)</name>
    <dbReference type="NCBI Taxonomy" id="300852"/>
    <lineage>
        <taxon>Bacteria</taxon>
        <taxon>Thermotogati</taxon>
        <taxon>Deinococcota</taxon>
        <taxon>Deinococci</taxon>
        <taxon>Thermales</taxon>
        <taxon>Thermaceae</taxon>
        <taxon>Thermus</taxon>
    </lineage>
</organism>
<proteinExistence type="evidence at protein level"/>
<accession>P56690</accession>
<accession>Q5SJE7</accession>
<feature type="chain" id="PRO_0000098567" description="Isoleucine--tRNA ligase">
    <location>
        <begin position="1"/>
        <end position="1043"/>
    </location>
</feature>
<feature type="short sequence motif" description="'HIGH' region">
    <location>
        <begin position="47"/>
        <end position="57"/>
    </location>
</feature>
<feature type="short sequence motif" description="'KMSKS' region">
    <location>
        <begin position="591"/>
        <end position="595"/>
    </location>
</feature>
<feature type="binding site" evidence="6 9">
    <location>
        <position position="46"/>
    </location>
    <ligand>
        <name>L-isoleucyl-5'-AMP</name>
        <dbReference type="ChEBI" id="CHEBI:178002"/>
    </ligand>
</feature>
<feature type="binding site" evidence="6 9">
    <location>
        <position position="57"/>
    </location>
    <ligand>
        <name>L-isoleucyl-5'-AMP</name>
        <dbReference type="ChEBI" id="CHEBI:178002"/>
    </ligand>
</feature>
<feature type="binding site" evidence="8 9 10">
    <location>
        <position position="181"/>
    </location>
    <ligand>
        <name>Zn(2+)</name>
        <dbReference type="ChEBI" id="CHEBI:29105"/>
        <label>1</label>
    </ligand>
</feature>
<feature type="binding site" evidence="8 9 10">
    <location>
        <position position="184"/>
    </location>
    <ligand>
        <name>Zn(2+)</name>
        <dbReference type="ChEBI" id="CHEBI:29105"/>
        <label>1</label>
    </ligand>
</feature>
<feature type="binding site" evidence="3">
    <location>
        <position position="319"/>
    </location>
    <ligand>
        <name>L-valine</name>
        <dbReference type="ChEBI" id="CHEBI:57762"/>
    </ligand>
</feature>
<feature type="binding site" evidence="3">
    <location>
        <position position="328"/>
    </location>
    <ligand>
        <name>L-valine</name>
        <dbReference type="ChEBI" id="CHEBI:57762"/>
    </ligand>
</feature>
<feature type="binding site" evidence="8 9 10">
    <location>
        <position position="389"/>
    </location>
    <ligand>
        <name>Zn(2+)</name>
        <dbReference type="ChEBI" id="CHEBI:29105"/>
        <label>1</label>
    </ligand>
</feature>
<feature type="binding site" evidence="8 9 10">
    <location>
        <position position="392"/>
    </location>
    <ligand>
        <name>Zn(2+)</name>
        <dbReference type="ChEBI" id="CHEBI:29105"/>
        <label>1</label>
    </ligand>
</feature>
<feature type="binding site" evidence="8 9">
    <location>
        <position position="461"/>
    </location>
    <ligand>
        <name>Zn(2+)</name>
        <dbReference type="ChEBI" id="CHEBI:29105"/>
        <label>2</label>
    </ligand>
</feature>
<feature type="binding site" evidence="8">
    <location>
        <position position="464"/>
    </location>
    <ligand>
        <name>Zn(2+)</name>
        <dbReference type="ChEBI" id="CHEBI:29105"/>
        <label>2</label>
    </ligand>
</feature>
<feature type="binding site" evidence="8 9 10">
    <location>
        <position position="502"/>
    </location>
    <ligand>
        <name>Zn(2+)</name>
        <dbReference type="ChEBI" id="CHEBI:29105"/>
        <label>2</label>
    </ligand>
</feature>
<feature type="binding site" evidence="8 9 10">
    <location>
        <position position="504"/>
    </location>
    <ligand>
        <name>Zn(2+)</name>
        <dbReference type="ChEBI" id="CHEBI:29105"/>
        <label>2</label>
    </ligand>
</feature>
<feature type="binding site" evidence="6 9">
    <location>
        <position position="550"/>
    </location>
    <ligand>
        <name>L-isoleucyl-5'-AMP</name>
        <dbReference type="ChEBI" id="CHEBI:178002"/>
    </ligand>
</feature>
<feature type="binding site" evidence="6 9">
    <location>
        <position position="551"/>
    </location>
    <ligand>
        <name>L-isoleucyl-5'-AMP</name>
        <dbReference type="ChEBI" id="CHEBI:178002"/>
    </ligand>
</feature>
<feature type="binding site" evidence="6 9">
    <location>
        <position position="553"/>
    </location>
    <ligand>
        <name>L-isoleucyl-5'-AMP</name>
        <dbReference type="ChEBI" id="CHEBI:178002"/>
    </ligand>
</feature>
<feature type="binding site" evidence="6 9">
    <location>
        <position position="554"/>
    </location>
    <ligand>
        <name>L-isoleucyl-5'-AMP</name>
        <dbReference type="ChEBI" id="CHEBI:178002"/>
    </ligand>
</feature>
<feature type="binding site" evidence="6 9">
    <location>
        <position position="581"/>
    </location>
    <ligand>
        <name>L-isoleucyl-5'-AMP</name>
        <dbReference type="ChEBI" id="CHEBI:178002"/>
    </ligand>
</feature>
<feature type="binding site" evidence="1">
    <location>
        <position position="594"/>
    </location>
    <ligand>
        <name>ATP</name>
        <dbReference type="ChEBI" id="CHEBI:30616"/>
    </ligand>
</feature>
<feature type="mutagenesis site" description="Has some defects in posttransfer editing activity." evidence="3">
    <original>T</original>
    <variation>A</variation>
    <location>
        <position position="228"/>
    </location>
</feature>
<feature type="mutagenesis site" description="Has some defects in posttransfer editing activity." evidence="3">
    <original>T</original>
    <variation>A</variation>
    <location>
        <position position="229"/>
    </location>
</feature>
<feature type="mutagenesis site" description="No change in posttransfer editing activity." evidence="3">
    <original>T</original>
    <variation>A</variation>
    <location>
        <position position="230"/>
    </location>
</feature>
<feature type="mutagenesis site" description="No change in posttransfer editing activity." evidence="3">
    <original>T</original>
    <variation>A</variation>
    <location>
        <position position="233"/>
    </location>
</feature>
<feature type="mutagenesis site" description="Has some defects in posttransfer editing activity." evidence="3">
    <original>D</original>
    <variation>A</variation>
    <location>
        <position position="328"/>
    </location>
</feature>
<feature type="helix" evidence="13">
    <location>
        <begin position="10"/>
        <end position="23"/>
    </location>
</feature>
<feature type="helix" evidence="13">
    <location>
        <begin position="26"/>
        <end position="33"/>
    </location>
</feature>
<feature type="turn" evidence="13">
    <location>
        <begin position="34"/>
        <end position="36"/>
    </location>
</feature>
<feature type="helix" evidence="13">
    <location>
        <begin position="57"/>
        <end position="73"/>
    </location>
</feature>
<feature type="strand" evidence="13">
    <location>
        <begin position="81"/>
        <end position="84"/>
    </location>
</feature>
<feature type="helix" evidence="13">
    <location>
        <begin position="88"/>
        <end position="98"/>
    </location>
</feature>
<feature type="helix" evidence="13">
    <location>
        <begin position="104"/>
        <end position="110"/>
    </location>
</feature>
<feature type="helix" evidence="13">
    <location>
        <begin position="112"/>
        <end position="122"/>
    </location>
</feature>
<feature type="turn" evidence="13">
    <location>
        <begin position="123"/>
        <end position="126"/>
    </location>
</feature>
<feature type="helix" evidence="13">
    <location>
        <begin position="127"/>
        <end position="130"/>
    </location>
</feature>
<feature type="helix" evidence="13">
    <location>
        <begin position="133"/>
        <end position="136"/>
    </location>
</feature>
<feature type="strand" evidence="13">
    <location>
        <begin position="142"/>
        <end position="148"/>
    </location>
</feature>
<feature type="helix" evidence="13">
    <location>
        <begin position="152"/>
        <end position="167"/>
    </location>
</feature>
<feature type="strand" evidence="13">
    <location>
        <begin position="171"/>
        <end position="174"/>
    </location>
</feature>
<feature type="strand" evidence="13">
    <location>
        <begin position="177"/>
        <end position="181"/>
    </location>
</feature>
<feature type="turn" evidence="13">
    <location>
        <begin position="182"/>
        <end position="185"/>
    </location>
</feature>
<feature type="helix" evidence="13">
    <location>
        <begin position="190"/>
        <end position="195"/>
    </location>
</feature>
<feature type="strand" evidence="16">
    <location>
        <begin position="204"/>
        <end position="212"/>
    </location>
</feature>
<feature type="helix" evidence="16">
    <location>
        <begin position="214"/>
        <end position="217"/>
    </location>
</feature>
<feature type="strand" evidence="16">
    <location>
        <begin position="220"/>
        <end position="229"/>
    </location>
</feature>
<feature type="helix" evidence="16">
    <location>
        <begin position="231"/>
        <end position="236"/>
    </location>
</feature>
<feature type="strand" evidence="16">
    <location>
        <begin position="239"/>
        <end position="242"/>
    </location>
</feature>
<feature type="strand" evidence="16">
    <location>
        <begin position="246"/>
        <end position="253"/>
    </location>
</feature>
<feature type="strand" evidence="16">
    <location>
        <begin position="256"/>
        <end position="261"/>
    </location>
</feature>
<feature type="helix" evidence="16">
    <location>
        <begin position="262"/>
        <end position="269"/>
    </location>
</feature>
<feature type="strand" evidence="16">
    <location>
        <begin position="275"/>
        <end position="280"/>
    </location>
</feature>
<feature type="helix" evidence="16">
    <location>
        <begin position="281"/>
        <end position="284"/>
    </location>
</feature>
<feature type="strand" evidence="16">
    <location>
        <begin position="302"/>
        <end position="305"/>
    </location>
</feature>
<feature type="strand" evidence="16">
    <location>
        <begin position="311"/>
        <end position="314"/>
    </location>
</feature>
<feature type="strand" evidence="16">
    <location>
        <begin position="318"/>
        <end position="320"/>
    </location>
</feature>
<feature type="helix" evidence="16">
    <location>
        <begin position="322"/>
        <end position="324"/>
    </location>
</feature>
<feature type="helix" evidence="16">
    <location>
        <begin position="326"/>
        <end position="335"/>
    </location>
</feature>
<feature type="strand" evidence="16">
    <location>
        <begin position="347"/>
        <end position="349"/>
    </location>
</feature>
<feature type="helix" evidence="13">
    <location>
        <begin position="352"/>
        <end position="354"/>
    </location>
</feature>
<feature type="helix" evidence="16">
    <location>
        <begin position="359"/>
        <end position="372"/>
    </location>
</feature>
<feature type="strand" evidence="16">
    <location>
        <begin position="376"/>
        <end position="380"/>
    </location>
</feature>
<feature type="strand" evidence="13">
    <location>
        <begin position="390"/>
        <end position="392"/>
    </location>
</feature>
<feature type="strand" evidence="13">
    <location>
        <begin position="397"/>
        <end position="400"/>
    </location>
</feature>
<feature type="strand" evidence="13">
    <location>
        <begin position="403"/>
        <end position="406"/>
    </location>
</feature>
<feature type="helix" evidence="13">
    <location>
        <begin position="408"/>
        <end position="411"/>
    </location>
</feature>
<feature type="helix" evidence="13">
    <location>
        <begin position="412"/>
        <end position="421"/>
    </location>
</feature>
<feature type="strand" evidence="13">
    <location>
        <begin position="422"/>
        <end position="426"/>
    </location>
</feature>
<feature type="helix" evidence="13">
    <location>
        <begin position="427"/>
        <end position="429"/>
    </location>
</feature>
<feature type="turn" evidence="13">
    <location>
        <begin position="430"/>
        <end position="434"/>
    </location>
</feature>
<feature type="helix" evidence="13">
    <location>
        <begin position="435"/>
        <end position="439"/>
    </location>
</feature>
<feature type="strand" evidence="15">
    <location>
        <begin position="447"/>
        <end position="449"/>
    </location>
</feature>
<feature type="strand" evidence="13">
    <location>
        <begin position="451"/>
        <end position="453"/>
    </location>
</feature>
<feature type="strand" evidence="13">
    <location>
        <begin position="458"/>
        <end position="465"/>
    </location>
</feature>
<feature type="helix" evidence="13">
    <location>
        <begin position="473"/>
        <end position="479"/>
    </location>
</feature>
<feature type="strand" evidence="13">
    <location>
        <begin position="480"/>
        <end position="482"/>
    </location>
</feature>
<feature type="helix" evidence="13">
    <location>
        <begin position="492"/>
        <end position="495"/>
    </location>
</feature>
<feature type="strand" evidence="13">
    <location>
        <begin position="499"/>
        <end position="501"/>
    </location>
</feature>
<feature type="strand" evidence="13">
    <location>
        <begin position="505"/>
        <end position="510"/>
    </location>
</feature>
<feature type="helix" evidence="13">
    <location>
        <begin position="517"/>
        <end position="527"/>
    </location>
</feature>
<feature type="turn" evidence="13">
    <location>
        <begin position="528"/>
        <end position="533"/>
    </location>
</feature>
<feature type="helix" evidence="13">
    <location>
        <begin position="536"/>
        <end position="542"/>
    </location>
</feature>
<feature type="strand" evidence="13">
    <location>
        <begin position="543"/>
        <end position="551"/>
    </location>
</feature>
<feature type="helix" evidence="13">
    <location>
        <begin position="552"/>
        <end position="556"/>
    </location>
</feature>
<feature type="helix" evidence="13">
    <location>
        <begin position="558"/>
        <end position="570"/>
    </location>
</feature>
<feature type="strand" evidence="13">
    <location>
        <begin position="574"/>
        <end position="581"/>
    </location>
</feature>
<feature type="strand" evidence="15">
    <location>
        <begin position="587"/>
        <end position="589"/>
    </location>
</feature>
<feature type="turn" evidence="13">
    <location>
        <begin position="594"/>
        <end position="597"/>
    </location>
</feature>
<feature type="helix" evidence="13">
    <location>
        <begin position="602"/>
        <end position="606"/>
    </location>
</feature>
<feature type="turn" evidence="13">
    <location>
        <begin position="607"/>
        <end position="609"/>
    </location>
</feature>
<feature type="helix" evidence="13">
    <location>
        <begin position="611"/>
        <end position="621"/>
    </location>
</feature>
<feature type="strand" evidence="13">
    <location>
        <begin position="624"/>
        <end position="626"/>
    </location>
</feature>
<feature type="helix" evidence="13">
    <location>
        <begin position="632"/>
        <end position="641"/>
    </location>
</feature>
<feature type="helix" evidence="13">
    <location>
        <begin position="643"/>
        <end position="660"/>
    </location>
</feature>
<feature type="helix" evidence="15">
    <location>
        <begin position="670"/>
        <end position="672"/>
    </location>
</feature>
<feature type="helix" evidence="13">
    <location>
        <begin position="675"/>
        <end position="696"/>
    </location>
</feature>
<feature type="helix" evidence="13">
    <location>
        <begin position="700"/>
        <end position="714"/>
    </location>
</feature>
<feature type="turn" evidence="13">
    <location>
        <begin position="717"/>
        <end position="719"/>
    </location>
</feature>
<feature type="helix" evidence="13">
    <location>
        <begin position="720"/>
        <end position="728"/>
    </location>
</feature>
<feature type="strand" evidence="13">
    <location>
        <begin position="733"/>
        <end position="735"/>
    </location>
</feature>
<feature type="helix" evidence="13">
    <location>
        <begin position="738"/>
        <end position="754"/>
    </location>
</feature>
<feature type="turn" evidence="13">
    <location>
        <begin position="755"/>
        <end position="757"/>
    </location>
</feature>
<feature type="helix" evidence="13">
    <location>
        <begin position="761"/>
        <end position="769"/>
    </location>
</feature>
<feature type="turn" evidence="13">
    <location>
        <begin position="770"/>
        <end position="773"/>
    </location>
</feature>
<feature type="turn" evidence="14">
    <location>
        <begin position="774"/>
        <end position="776"/>
    </location>
</feature>
<feature type="helix" evidence="13">
    <location>
        <begin position="781"/>
        <end position="783"/>
    </location>
</feature>
<feature type="turn" evidence="13">
    <location>
        <begin position="791"/>
        <end position="793"/>
    </location>
</feature>
<feature type="helix" evidence="13">
    <location>
        <begin position="796"/>
        <end position="812"/>
    </location>
</feature>